<sequence>MKTITIPRQNLTQYEIMLIMRPDLPEEKFLKFLSEIKEHAKRNLALEFNLSNRGRRKLAYAMRKFQDGIYIQFNFLGSGYILNSLIKRLKLEESILRYIVQKT</sequence>
<proteinExistence type="inferred from homology"/>
<organism>
    <name type="scientific">Cyanidium caldarium</name>
    <name type="common">Red alga</name>
    <dbReference type="NCBI Taxonomy" id="2771"/>
    <lineage>
        <taxon>Eukaryota</taxon>
        <taxon>Rhodophyta</taxon>
        <taxon>Bangiophyceae</taxon>
        <taxon>Cyanidiales</taxon>
        <taxon>Cyanidiaceae</taxon>
        <taxon>Cyanidium</taxon>
    </lineage>
</organism>
<accession>O19917</accession>
<geneLocation type="chloroplast"/>
<name>RR6_CYACA</name>
<keyword id="KW-0150">Chloroplast</keyword>
<keyword id="KW-0934">Plastid</keyword>
<keyword id="KW-0687">Ribonucleoprotein</keyword>
<keyword id="KW-0689">Ribosomal protein</keyword>
<keyword id="KW-0694">RNA-binding</keyword>
<keyword id="KW-0699">rRNA-binding</keyword>
<feature type="chain" id="PRO_0000176885" description="Small ribosomal subunit protein bS6c">
    <location>
        <begin position="1"/>
        <end position="103"/>
    </location>
</feature>
<reference key="1">
    <citation type="journal article" date="2000" name="J. Mol. Evol.">
        <title>The structure and gene repertoire of an ancient red algal plastid genome.</title>
        <authorList>
            <person name="Gloeckner G."/>
            <person name="Rosenthal A."/>
            <person name="Valentin K.-U."/>
        </authorList>
    </citation>
    <scope>NUCLEOTIDE SEQUENCE [LARGE SCALE GENOMIC DNA]</scope>
    <source>
        <strain>RK-1</strain>
    </source>
</reference>
<protein>
    <recommendedName>
        <fullName evidence="2">Small ribosomal subunit protein bS6c</fullName>
    </recommendedName>
    <alternativeName>
        <fullName>30S ribosomal protein S6, chloroplastic</fullName>
    </alternativeName>
</protein>
<gene>
    <name type="primary">rps6</name>
</gene>
<evidence type="ECO:0000250" key="1"/>
<evidence type="ECO:0000305" key="2"/>
<comment type="function">
    <text evidence="1">Binds together with bS18 to 16S ribosomal RNA.</text>
</comment>
<comment type="subcellular location">
    <subcellularLocation>
        <location>Plastid</location>
        <location>Chloroplast</location>
    </subcellularLocation>
</comment>
<comment type="similarity">
    <text evidence="2">Belongs to the bacterial ribosomal protein bS6 family.</text>
</comment>
<dbReference type="EMBL" id="AF022186">
    <property type="protein sequence ID" value="AAB82672.1"/>
    <property type="molecule type" value="Genomic_DNA"/>
</dbReference>
<dbReference type="PIR" id="T11985">
    <property type="entry name" value="T11985"/>
</dbReference>
<dbReference type="RefSeq" id="NP_045089.1">
    <property type="nucleotide sequence ID" value="NC_001840.1"/>
</dbReference>
<dbReference type="SMR" id="O19917"/>
<dbReference type="GeneID" id="800162"/>
<dbReference type="GO" id="GO:0009507">
    <property type="term" value="C:chloroplast"/>
    <property type="evidence" value="ECO:0007669"/>
    <property type="project" value="UniProtKB-SubCell"/>
</dbReference>
<dbReference type="GO" id="GO:1990904">
    <property type="term" value="C:ribonucleoprotein complex"/>
    <property type="evidence" value="ECO:0007669"/>
    <property type="project" value="UniProtKB-KW"/>
</dbReference>
<dbReference type="GO" id="GO:0005840">
    <property type="term" value="C:ribosome"/>
    <property type="evidence" value="ECO:0007669"/>
    <property type="project" value="UniProtKB-KW"/>
</dbReference>
<dbReference type="GO" id="GO:0070181">
    <property type="term" value="F:small ribosomal subunit rRNA binding"/>
    <property type="evidence" value="ECO:0007669"/>
    <property type="project" value="TreeGrafter"/>
</dbReference>
<dbReference type="GO" id="GO:0003735">
    <property type="term" value="F:structural constituent of ribosome"/>
    <property type="evidence" value="ECO:0007669"/>
    <property type="project" value="InterPro"/>
</dbReference>
<dbReference type="GO" id="GO:0006412">
    <property type="term" value="P:translation"/>
    <property type="evidence" value="ECO:0007669"/>
    <property type="project" value="UniProtKB-UniRule"/>
</dbReference>
<dbReference type="Gene3D" id="3.30.70.60">
    <property type="match status" value="1"/>
</dbReference>
<dbReference type="HAMAP" id="MF_00360">
    <property type="entry name" value="Ribosomal_bS6"/>
    <property type="match status" value="1"/>
</dbReference>
<dbReference type="InterPro" id="IPR000529">
    <property type="entry name" value="Ribosomal_bS6"/>
</dbReference>
<dbReference type="InterPro" id="IPR035980">
    <property type="entry name" value="Ribosomal_bS6_sf"/>
</dbReference>
<dbReference type="InterPro" id="IPR020814">
    <property type="entry name" value="Ribosomal_S6_plastid/chlpt"/>
</dbReference>
<dbReference type="InterPro" id="IPR014717">
    <property type="entry name" value="Transl_elong_EF1B/ribsomal_bS6"/>
</dbReference>
<dbReference type="NCBIfam" id="TIGR00166">
    <property type="entry name" value="S6"/>
    <property type="match status" value="1"/>
</dbReference>
<dbReference type="PANTHER" id="PTHR21011">
    <property type="entry name" value="MITOCHONDRIAL 28S RIBOSOMAL PROTEIN S6"/>
    <property type="match status" value="1"/>
</dbReference>
<dbReference type="PANTHER" id="PTHR21011:SF1">
    <property type="entry name" value="SMALL RIBOSOMAL SUBUNIT PROTEIN BS6M"/>
    <property type="match status" value="1"/>
</dbReference>
<dbReference type="Pfam" id="PF01250">
    <property type="entry name" value="Ribosomal_S6"/>
    <property type="match status" value="1"/>
</dbReference>
<dbReference type="SUPFAM" id="SSF54995">
    <property type="entry name" value="Ribosomal protein S6"/>
    <property type="match status" value="1"/>
</dbReference>